<keyword id="KW-0007">Acetylation</keyword>
<keyword id="KW-0903">Direct protein sequencing</keyword>
<keyword id="KW-0349">Heme</keyword>
<keyword id="KW-0408">Iron</keyword>
<keyword id="KW-0479">Metal-binding</keyword>
<keyword id="KW-0561">Oxygen transport</keyword>
<keyword id="KW-0813">Transport</keyword>
<comment type="function">
    <text evidence="2 3">Involved in oxygen transport from gills to the various peripheral tissues.</text>
</comment>
<comment type="subunit">
    <text evidence="2">Hb 1 is a heterotetramer of two alpha-1 and two beta-1 chains.</text>
</comment>
<comment type="tissue specificity">
    <text evidence="3">Red blood cells.</text>
</comment>
<comment type="similarity">
    <text evidence="1">Belongs to the globin family.</text>
</comment>
<reference evidence="3 4" key="1">
    <citation type="journal article" date="2006" name="J. Biol. Chem.">
        <title>The oxygen transport system in three species of the boreal fish family Gadidae. Molecular phylogeny of hemoglobin.</title>
        <authorList>
            <person name="Verde C."/>
            <person name="Balestrieri M."/>
            <person name="de Pascale D."/>
            <person name="Pagnozzi D."/>
            <person name="Lecointre G."/>
            <person name="di Prisco G."/>
        </authorList>
    </citation>
    <scope>PROTEIN SEQUENCE OF 2-143</scope>
    <scope>NUCLEOTIDE SEQUENCE [MRNA] OF 45-143</scope>
    <scope>FUNCTION</scope>
    <scope>SUBUNIT</scope>
    <scope>ACETYLATION AT SER-2</scope>
    <source>
        <tissue evidence="2">Blood</tissue>
        <tissue evidence="2">Spleen</tissue>
    </source>
</reference>
<protein>
    <recommendedName>
        <fullName>Hemoglobin subunit alpha-1</fullName>
    </recommendedName>
    <alternativeName>
        <fullName>Alpha-1-globin</fullName>
    </alternativeName>
    <alternativeName>
        <fullName>Hemoglobin alpha-1 chain</fullName>
    </alternativeName>
</protein>
<feature type="initiator methionine" description="Removed" evidence="2">
    <location>
        <position position="1"/>
    </location>
</feature>
<feature type="chain" id="PRO_0000247577" description="Hemoglobin subunit alpha-1">
    <location>
        <begin position="2"/>
        <end position="143"/>
    </location>
</feature>
<feature type="domain" description="Globin" evidence="1">
    <location>
        <begin position="2"/>
        <end position="143"/>
    </location>
</feature>
<feature type="binding site" evidence="1">
    <location>
        <position position="60"/>
    </location>
    <ligand>
        <name>O2</name>
        <dbReference type="ChEBI" id="CHEBI:15379"/>
    </ligand>
</feature>
<feature type="binding site" description="proximal binding residue" evidence="1">
    <location>
        <position position="89"/>
    </location>
    <ligand>
        <name>heme b</name>
        <dbReference type="ChEBI" id="CHEBI:60344"/>
    </ligand>
    <ligandPart>
        <name>Fe</name>
        <dbReference type="ChEBI" id="CHEBI:18248"/>
    </ligandPart>
</feature>
<feature type="modified residue" description="N-acetylserine" evidence="2">
    <location>
        <position position="2"/>
    </location>
</feature>
<feature type="sequence conflict" description="In Ref. 1; AAZ99822." evidence="3" ref="1">
    <location>
        <position position="79"/>
    </location>
</feature>
<name>HBA1_BORSA</name>
<gene>
    <name type="primary">hba1</name>
</gene>
<sequence>MSLSAKDKATVKDFFGKMSTRSDDIGAEALSRLVAVYPQTKSYFAHWKSASPGSAPVRKHGITIMGGVYDAVGKIDDLKAGLLSLSELHAFMLRVDPVNFKLLAHCMLVCMSMVFPEEFTPQVHVAVDKFLAQLALALCEKYR</sequence>
<organism>
    <name type="scientific">Boreogadus saida</name>
    <name type="common">Polar cod</name>
    <name type="synonym">Gadus saida</name>
    <dbReference type="NCBI Taxonomy" id="44932"/>
    <lineage>
        <taxon>Eukaryota</taxon>
        <taxon>Metazoa</taxon>
        <taxon>Chordata</taxon>
        <taxon>Craniata</taxon>
        <taxon>Vertebrata</taxon>
        <taxon>Euteleostomi</taxon>
        <taxon>Actinopterygii</taxon>
        <taxon>Neopterygii</taxon>
        <taxon>Teleostei</taxon>
        <taxon>Neoteleostei</taxon>
        <taxon>Acanthomorphata</taxon>
        <taxon>Zeiogadaria</taxon>
        <taxon>Gadariae</taxon>
        <taxon>Gadiformes</taxon>
        <taxon>Gadoidei</taxon>
        <taxon>Gadidae</taxon>
        <taxon>Boreogadus</taxon>
    </lineage>
</organism>
<accession>Q1AGS9</accession>
<accession>P84605</accession>
<proteinExistence type="evidence at protein level"/>
<evidence type="ECO:0000255" key="1">
    <source>
        <dbReference type="PROSITE-ProRule" id="PRU00238"/>
    </source>
</evidence>
<evidence type="ECO:0000269" key="2">
    <source>
    </source>
</evidence>
<evidence type="ECO:0000305" key="3"/>
<evidence type="ECO:0000312" key="4">
    <source>
        <dbReference type="EMBL" id="AAZ99822.1"/>
    </source>
</evidence>
<dbReference type="EMBL" id="DQ125470">
    <property type="protein sequence ID" value="AAZ99822.1"/>
    <property type="molecule type" value="mRNA"/>
</dbReference>
<dbReference type="SMR" id="Q1AGS9"/>
<dbReference type="iPTMnet" id="Q1AGS9"/>
<dbReference type="GO" id="GO:0072562">
    <property type="term" value="C:blood microparticle"/>
    <property type="evidence" value="ECO:0007669"/>
    <property type="project" value="TreeGrafter"/>
</dbReference>
<dbReference type="GO" id="GO:0031838">
    <property type="term" value="C:haptoglobin-hemoglobin complex"/>
    <property type="evidence" value="ECO:0007669"/>
    <property type="project" value="TreeGrafter"/>
</dbReference>
<dbReference type="GO" id="GO:0005833">
    <property type="term" value="C:hemoglobin complex"/>
    <property type="evidence" value="ECO:0007669"/>
    <property type="project" value="InterPro"/>
</dbReference>
<dbReference type="GO" id="GO:0031720">
    <property type="term" value="F:haptoglobin binding"/>
    <property type="evidence" value="ECO:0007669"/>
    <property type="project" value="TreeGrafter"/>
</dbReference>
<dbReference type="GO" id="GO:0020037">
    <property type="term" value="F:heme binding"/>
    <property type="evidence" value="ECO:0007669"/>
    <property type="project" value="InterPro"/>
</dbReference>
<dbReference type="GO" id="GO:0005506">
    <property type="term" value="F:iron ion binding"/>
    <property type="evidence" value="ECO:0007669"/>
    <property type="project" value="InterPro"/>
</dbReference>
<dbReference type="GO" id="GO:0043177">
    <property type="term" value="F:organic acid binding"/>
    <property type="evidence" value="ECO:0007669"/>
    <property type="project" value="TreeGrafter"/>
</dbReference>
<dbReference type="GO" id="GO:0019825">
    <property type="term" value="F:oxygen binding"/>
    <property type="evidence" value="ECO:0007669"/>
    <property type="project" value="InterPro"/>
</dbReference>
<dbReference type="GO" id="GO:0005344">
    <property type="term" value="F:oxygen carrier activity"/>
    <property type="evidence" value="ECO:0007669"/>
    <property type="project" value="UniProtKB-KW"/>
</dbReference>
<dbReference type="GO" id="GO:0004601">
    <property type="term" value="F:peroxidase activity"/>
    <property type="evidence" value="ECO:0007669"/>
    <property type="project" value="TreeGrafter"/>
</dbReference>
<dbReference type="GO" id="GO:0042744">
    <property type="term" value="P:hydrogen peroxide catabolic process"/>
    <property type="evidence" value="ECO:0007669"/>
    <property type="project" value="TreeGrafter"/>
</dbReference>
<dbReference type="CDD" id="cd08927">
    <property type="entry name" value="Hb-alpha-like"/>
    <property type="match status" value="1"/>
</dbReference>
<dbReference type="FunFam" id="1.10.490.10:FF:000002">
    <property type="entry name" value="Hemoglobin subunit alpha"/>
    <property type="match status" value="1"/>
</dbReference>
<dbReference type="Gene3D" id="1.10.490.10">
    <property type="entry name" value="Globins"/>
    <property type="match status" value="1"/>
</dbReference>
<dbReference type="InterPro" id="IPR000971">
    <property type="entry name" value="Globin"/>
</dbReference>
<dbReference type="InterPro" id="IPR009050">
    <property type="entry name" value="Globin-like_sf"/>
</dbReference>
<dbReference type="InterPro" id="IPR012292">
    <property type="entry name" value="Globin/Proto"/>
</dbReference>
<dbReference type="InterPro" id="IPR002338">
    <property type="entry name" value="Hemoglobin_a-typ"/>
</dbReference>
<dbReference type="InterPro" id="IPR050056">
    <property type="entry name" value="Hemoglobin_oxygen_transport"/>
</dbReference>
<dbReference type="InterPro" id="IPR002339">
    <property type="entry name" value="Hemoglobin_pi"/>
</dbReference>
<dbReference type="PANTHER" id="PTHR11442">
    <property type="entry name" value="HEMOGLOBIN FAMILY MEMBER"/>
    <property type="match status" value="1"/>
</dbReference>
<dbReference type="PANTHER" id="PTHR11442:SF41">
    <property type="entry name" value="HEMOGLOBIN SUBUNIT ZETA"/>
    <property type="match status" value="1"/>
</dbReference>
<dbReference type="Pfam" id="PF00042">
    <property type="entry name" value="Globin"/>
    <property type="match status" value="1"/>
</dbReference>
<dbReference type="PRINTS" id="PR00612">
    <property type="entry name" value="ALPHAHAEM"/>
</dbReference>
<dbReference type="PRINTS" id="PR00815">
    <property type="entry name" value="PIHAEM"/>
</dbReference>
<dbReference type="SUPFAM" id="SSF46458">
    <property type="entry name" value="Globin-like"/>
    <property type="match status" value="1"/>
</dbReference>
<dbReference type="PROSITE" id="PS01033">
    <property type="entry name" value="GLOBIN"/>
    <property type="match status" value="1"/>
</dbReference>